<accession>P12585</accession>
<accession>Q84013</accession>
<accession>Q84014</accession>
<name>HEMA_I82A5</name>
<gene>
    <name evidence="1" type="primary">HA</name>
</gene>
<evidence type="ECO:0000255" key="1">
    <source>
        <dbReference type="HAMAP-Rule" id="MF_04072"/>
    </source>
</evidence>
<keyword id="KW-1167">Clathrin- and caveolin-independent endocytosis of virus by host</keyword>
<keyword id="KW-1165">Clathrin-mediated endocytosis of virus by host</keyword>
<keyword id="KW-1015">Disulfide bond</keyword>
<keyword id="KW-1170">Fusion of virus membrane with host endosomal membrane</keyword>
<keyword id="KW-1168">Fusion of virus membrane with host membrane</keyword>
<keyword id="KW-0325">Glycoprotein</keyword>
<keyword id="KW-0348">Hemagglutinin</keyword>
<keyword id="KW-1032">Host cell membrane</keyword>
<keyword id="KW-1043">Host membrane</keyword>
<keyword id="KW-0945">Host-virus interaction</keyword>
<keyword id="KW-0449">Lipoprotein</keyword>
<keyword id="KW-0472">Membrane</keyword>
<keyword id="KW-0564">Palmitate</keyword>
<keyword id="KW-0812">Transmembrane</keyword>
<keyword id="KW-1133">Transmembrane helix</keyword>
<keyword id="KW-1161">Viral attachment to host cell</keyword>
<keyword id="KW-0261">Viral envelope protein</keyword>
<keyword id="KW-1162">Viral penetration into host cytoplasm</keyword>
<keyword id="KW-0946">Virion</keyword>
<keyword id="KW-1164">Virus endocytosis by host</keyword>
<keyword id="KW-1160">Virus entry into host cell</keyword>
<comment type="function">
    <text evidence="1">Binds to sialic acid-containing receptors on the cell surface, bringing about the attachment of the virus particle to the cell. This attachment induces virion internalization either through clathrin-dependent endocytosis or through clathrin- and caveolin-independent pathway. Plays a major role in the determination of host range restriction and virulence. Class I viral fusion protein. Responsible for penetration of the virus into the cell cytoplasm by mediating the fusion of the membrane of the endocytosed virus particle with the endosomal membrane. Low pH in endosomes induces an irreversible conformational change in HA2, releasing the fusion hydrophobic peptide. Several trimers are required to form a competent fusion pore.</text>
</comment>
<comment type="subunit">
    <text evidence="1">Homotrimer of disulfide-linked HA1-HA2.</text>
</comment>
<comment type="subcellular location">
    <subcellularLocation>
        <location evidence="1">Virion membrane</location>
        <topology evidence="1">Single-pass type I membrane protein</topology>
    </subcellularLocation>
    <subcellularLocation>
        <location evidence="1">Host apical cell membrane</location>
        <topology evidence="1">Single-pass type I membrane protein</topology>
    </subcellularLocation>
    <text evidence="1">Targeted to the apical plasma membrane in epithelial polarized cells through a signal present in the transmembrane domain. Associated with glycosphingolipid- and cholesterol-enriched detergent-resistant lipid rafts.</text>
</comment>
<comment type="PTM">
    <text evidence="1">Palmitoylated.</text>
</comment>
<comment type="PTM">
    <text evidence="1">In natural infection, inactive HA is matured into HA1 and HA2 outside the cell by one or more trypsin-like, arginine-specific endoprotease secreted by the bronchial epithelial cells. One identified protease that may be involved in this process is secreted in lungs by club cells.</text>
</comment>
<comment type="miscellaneous">
    <text>Major glycoprotein, comprises over 80% of the envelope proteins present in virus particle.</text>
</comment>
<comment type="miscellaneous">
    <text>The extent of infection into host organism is determined by HA. Influenza viruses bud from the apical surface of polarized epithelial cells (e.g. bronchial epithelial cells) into lumen of lungs and are therefore usually pneumotropic. The reason is that HA is cleaved by tryptase clara which is restricted to lungs. However, HAs of H5 and H7 pantropic avian viruses subtypes can be cleaved by furin and subtilisin-type enzymes, allowing the virus to grow in other organs than lungs.</text>
</comment>
<comment type="miscellaneous">
    <text>The influenza A genome consist of 8 RNA segments. Genetic variation of hemagglutinin and/or neuraminidase genes results in the emergence of new influenza strains. The mechanism of variation can be the result of point mutations or the result of genetic reassortment between segments of two different strains.</text>
</comment>
<comment type="similarity">
    <text evidence="1">Belongs to the influenza viruses hemagglutinin family.</text>
</comment>
<proteinExistence type="inferred from homology"/>
<organismHost>
    <name type="scientific">Aves</name>
    <dbReference type="NCBI Taxonomy" id="8782"/>
</organismHost>
<organismHost>
    <name type="scientific">Equus caballus</name>
    <name type="common">Horse</name>
    <dbReference type="NCBI Taxonomy" id="9796"/>
</organismHost>
<protein>
    <recommendedName>
        <fullName evidence="1">Hemagglutinin</fullName>
    </recommendedName>
    <component>
        <recommendedName>
            <fullName evidence="1">Hemagglutinin HA1 chain</fullName>
        </recommendedName>
    </component>
    <component>
        <recommendedName>
            <fullName evidence="1">Hemagglutinin HA2 chain</fullName>
        </recommendedName>
    </component>
</protein>
<organism>
    <name type="scientific">Influenza A virus (strain A/Duck/Hokkaido/7/1982 H3N8)</name>
    <dbReference type="NCBI Taxonomy" id="11360"/>
    <lineage>
        <taxon>Viruses</taxon>
        <taxon>Riboviria</taxon>
        <taxon>Orthornavirae</taxon>
        <taxon>Negarnaviricota</taxon>
        <taxon>Polyploviricotina</taxon>
        <taxon>Insthoviricetes</taxon>
        <taxon>Articulavirales</taxon>
        <taxon>Orthomyxoviridae</taxon>
        <taxon>Alphainfluenzavirus</taxon>
        <taxon>Alphainfluenzavirus influenzae</taxon>
        <taxon>Influenza A virus</taxon>
    </lineage>
</organism>
<sequence>QDLPGNDNSTATLCLGHHAVPNGTIVKTITDDQIEVTNATELVQSSSTGKICNNPHRILDGRDCTLIDALLGDPHCDVFQDETWDLFVERSNAFSNCYPYDVPDYASLRSLVASSGTLEFITEGFTWTGVTQNGGSNACKRGPASGFFSRLNWLTKSGSTYPVLNVTMPNNDNFDKLYIWGVHHPSTNQEQTNLYVQASGRVTVSTRRSQQTIIPNIGSRPWVRGQSSRISIYWTIVKPGDVLVINSNGNLIAPRGYFKMRTGKSSVMRSDAPIDTCVSECITPNGSIPNDKPFQNVNKITYGACPKYVKQNTLKLATGMRNVPEKQTRGLFGAIAGFIENGWEGMIDGWYGFRHQNSEGTGQAADLKSTQAAIDQINGKLNRVIEKTNEKFHQIEKEFSEVEGRIQDLEKYVEDTKIDLWSYNADVLVALENQHTIDLTDSEMNKLFEKTRRQLRENAEDMGNGCFKIYHKCDNACIESIRNGTYDHDIYRDEALNNRFQIKGVELKSGYKDWILWISFAISCFLLCAVLLGFIMWACQRGNIRCNICI</sequence>
<feature type="chain" id="PRO_0000440847" description="Hemagglutinin HA1 chain" evidence="1">
    <location>
        <begin position="1"/>
        <end position="329"/>
    </location>
</feature>
<feature type="chain" id="PRO_0000038923" description="Hemagglutinin HA2 chain" evidence="1">
    <location>
        <begin position="330"/>
        <end position="550"/>
    </location>
</feature>
<feature type="topological domain" description="Extracellular" evidence="1">
    <location>
        <begin position="1"/>
        <end position="514"/>
    </location>
</feature>
<feature type="transmembrane region" description="Helical" evidence="1">
    <location>
        <begin position="515"/>
        <end position="535"/>
    </location>
</feature>
<feature type="topological domain" description="Cytoplasmic" evidence="1">
    <location>
        <begin position="536"/>
        <end position="550"/>
    </location>
</feature>
<feature type="site" description="Cleavage; by host" evidence="1">
    <location>
        <begin position="329"/>
        <end position="330"/>
    </location>
</feature>
<feature type="lipid moiety-binding region" description="S-palmitoyl cysteine; by host" evidence="1">
    <location>
        <position position="539"/>
    </location>
</feature>
<feature type="lipid moiety-binding region" description="S-palmitoyl cysteine; by host" evidence="1">
    <location>
        <position position="546"/>
    </location>
</feature>
<feature type="lipid moiety-binding region" description="S-palmitoyl cysteine; by host" evidence="1">
    <location>
        <position position="549"/>
    </location>
</feature>
<feature type="glycosylation site" description="N-linked (GlcNAc...) asparagine; by host" evidence="1">
    <location>
        <position position="8"/>
    </location>
</feature>
<feature type="glycosylation site" description="N-linked (GlcNAc...) asparagine; by host" evidence="1">
    <location>
        <position position="22"/>
    </location>
</feature>
<feature type="glycosylation site" description="N-linked (GlcNAc...) asparagine; by host" evidence="1">
    <location>
        <position position="38"/>
    </location>
</feature>
<feature type="glycosylation site" description="N-linked (GlcNAc...) asparagine; by host" evidence="1">
    <location>
        <position position="165"/>
    </location>
</feature>
<feature type="glycosylation site" description="N-linked (GlcNAc...) asparagine; by host" evidence="1">
    <location>
        <position position="285"/>
    </location>
</feature>
<feature type="glycosylation site" description="N-linked (GlcNAc...) asparagine; by host" evidence="1">
    <location>
        <position position="483"/>
    </location>
</feature>
<feature type="disulfide bond" description="Interchain (between HA1 and HA2 chains)" evidence="1">
    <location>
        <begin position="14"/>
        <end position="466"/>
    </location>
</feature>
<feature type="disulfide bond" evidence="1">
    <location>
        <begin position="52"/>
        <end position="277"/>
    </location>
</feature>
<feature type="disulfide bond" evidence="1">
    <location>
        <begin position="64"/>
        <end position="76"/>
    </location>
</feature>
<feature type="disulfide bond" evidence="1">
    <location>
        <begin position="97"/>
        <end position="139"/>
    </location>
</feature>
<feature type="disulfide bond" evidence="1">
    <location>
        <begin position="281"/>
        <end position="305"/>
    </location>
</feature>
<feature type="disulfide bond" evidence="1">
    <location>
        <begin position="473"/>
        <end position="477"/>
    </location>
</feature>
<feature type="non-terminal residue">
    <location>
        <position position="1"/>
    </location>
</feature>
<dbReference type="EMBL" id="M16740">
    <property type="protein sequence ID" value="AAA43146.1"/>
    <property type="molecule type" value="Genomic_RNA"/>
</dbReference>
<dbReference type="SMR" id="P12585"/>
<dbReference type="GlyCosmos" id="P12585">
    <property type="glycosylation" value="6 sites, No reported glycans"/>
</dbReference>
<dbReference type="GO" id="GO:0020002">
    <property type="term" value="C:host cell plasma membrane"/>
    <property type="evidence" value="ECO:0007669"/>
    <property type="project" value="UniProtKB-SubCell"/>
</dbReference>
<dbReference type="GO" id="GO:0016020">
    <property type="term" value="C:membrane"/>
    <property type="evidence" value="ECO:0007669"/>
    <property type="project" value="UniProtKB-KW"/>
</dbReference>
<dbReference type="GO" id="GO:0019031">
    <property type="term" value="C:viral envelope"/>
    <property type="evidence" value="ECO:0007669"/>
    <property type="project" value="UniProtKB-KW"/>
</dbReference>
<dbReference type="GO" id="GO:0055036">
    <property type="term" value="C:virion membrane"/>
    <property type="evidence" value="ECO:0007669"/>
    <property type="project" value="UniProtKB-SubCell"/>
</dbReference>
<dbReference type="GO" id="GO:0046789">
    <property type="term" value="F:host cell surface receptor binding"/>
    <property type="evidence" value="ECO:0007669"/>
    <property type="project" value="InterPro"/>
</dbReference>
<dbReference type="GO" id="GO:0075512">
    <property type="term" value="P:clathrin-dependent endocytosis of virus by host cell"/>
    <property type="evidence" value="ECO:0007669"/>
    <property type="project" value="UniProtKB-KW"/>
</dbReference>
<dbReference type="GO" id="GO:0039654">
    <property type="term" value="P:fusion of virus membrane with host endosome membrane"/>
    <property type="evidence" value="ECO:0007669"/>
    <property type="project" value="UniProtKB-KW"/>
</dbReference>
<dbReference type="GO" id="GO:0019064">
    <property type="term" value="P:fusion of virus membrane with host plasma membrane"/>
    <property type="evidence" value="ECO:0007669"/>
    <property type="project" value="InterPro"/>
</dbReference>
<dbReference type="GO" id="GO:0019062">
    <property type="term" value="P:virion attachment to host cell"/>
    <property type="evidence" value="ECO:0007669"/>
    <property type="project" value="UniProtKB-KW"/>
</dbReference>
<dbReference type="FunFam" id="3.90.20.10:FF:000001">
    <property type="entry name" value="Hemagglutinin"/>
    <property type="match status" value="1"/>
</dbReference>
<dbReference type="FunFam" id="3.90.209.20:FF:000001">
    <property type="entry name" value="Hemagglutinin"/>
    <property type="match status" value="1"/>
</dbReference>
<dbReference type="Gene3D" id="3.90.20.10">
    <property type="match status" value="1"/>
</dbReference>
<dbReference type="Gene3D" id="3.90.209.20">
    <property type="match status" value="1"/>
</dbReference>
<dbReference type="HAMAP" id="MF_04072">
    <property type="entry name" value="INFV_HEMA"/>
    <property type="match status" value="1"/>
</dbReference>
<dbReference type="InterPro" id="IPR008980">
    <property type="entry name" value="Capsid_hemagglutn"/>
</dbReference>
<dbReference type="InterPro" id="IPR013828">
    <property type="entry name" value="Hemagglutn_HA1_a/b_dom_sf"/>
</dbReference>
<dbReference type="InterPro" id="IPR000149">
    <property type="entry name" value="Hemagglutn_influenz_A"/>
</dbReference>
<dbReference type="InterPro" id="IPR001364">
    <property type="entry name" value="Hemagglutn_influenz_A/B"/>
</dbReference>
<dbReference type="Pfam" id="PF00509">
    <property type="entry name" value="Hemagglutinin"/>
    <property type="match status" value="1"/>
</dbReference>
<dbReference type="PRINTS" id="PR00330">
    <property type="entry name" value="HEMAGGLUTN1"/>
</dbReference>
<dbReference type="PRINTS" id="PR00329">
    <property type="entry name" value="HEMAGGLUTN12"/>
</dbReference>
<dbReference type="SUPFAM" id="SSF58064">
    <property type="entry name" value="Influenza hemagglutinin (stalk)"/>
    <property type="match status" value="1"/>
</dbReference>
<dbReference type="SUPFAM" id="SSF49818">
    <property type="entry name" value="Viral protein domain"/>
    <property type="match status" value="1"/>
</dbReference>
<reference key="1">
    <citation type="journal article" date="1987" name="Virology">
        <title>Antigenic and genetic conservation of H3 influenza virus in wild ducks.</title>
        <authorList>
            <person name="Kida H."/>
            <person name="Kawaoka Y."/>
            <person name="Naeve C.W."/>
            <person name="Webster R.G."/>
        </authorList>
    </citation>
    <scope>NUCLEOTIDE SEQUENCE [GENOMIC RNA]</scope>
</reference>